<name>BCCP_STRP6</name>
<evidence type="ECO:0000250" key="1"/>
<evidence type="ECO:0000250" key="2">
    <source>
        <dbReference type="UniProtKB" id="P0ABD8"/>
    </source>
</evidence>
<evidence type="ECO:0000255" key="3">
    <source>
        <dbReference type="PROSITE-ProRule" id="PRU01066"/>
    </source>
</evidence>
<evidence type="ECO:0000256" key="4">
    <source>
        <dbReference type="SAM" id="MobiDB-lite"/>
    </source>
</evidence>
<evidence type="ECO:0000269" key="5">
    <source ref="2"/>
</evidence>
<evidence type="ECO:0000305" key="6"/>
<evidence type="ECO:0000312" key="7">
    <source>
        <dbReference type="EMBL" id="AAT87617.1"/>
    </source>
</evidence>
<reference evidence="7" key="1">
    <citation type="journal article" date="2004" name="J. Infect. Dis.">
        <title>Progress toward characterization of the group A Streptococcus metagenome: complete genome sequence of a macrolide-resistant serotype M6 strain.</title>
        <authorList>
            <person name="Banks D.J."/>
            <person name="Porcella S.F."/>
            <person name="Barbian K.D."/>
            <person name="Beres S.B."/>
            <person name="Philips L.E."/>
            <person name="Voyich J.M."/>
            <person name="DeLeo F.R."/>
            <person name="Martin J.M."/>
            <person name="Somerville G.A."/>
            <person name="Musser J.M."/>
        </authorList>
    </citation>
    <scope>NUCLEOTIDE SEQUENCE [LARGE SCALE GENOMIC DNA]</scope>
    <source>
        <strain>ATCC BAA-946 / MGAS10394</strain>
    </source>
</reference>
<reference evidence="6" key="2">
    <citation type="submission" date="2000-05" db="UniProtKB">
        <title>Two-dimensional gel electrophoresis map of Streptococcus pyogenes proteins.</title>
        <authorList>
            <person name="Hogan D.A."/>
            <person name="Du P."/>
            <person name="Stevenson T.I."/>
            <person name="Whitton M."/>
            <person name="Kilby G.W."/>
            <person name="Rogers J."/>
            <person name="VanBogelen R.A."/>
        </authorList>
    </citation>
    <scope>PROTEIN SEQUENCE OF 8-19 AND 25-34</scope>
    <scope>MASS SPECTROMETRY</scope>
    <source>
        <strain evidence="5">JRS4 / Serotype M6</strain>
    </source>
</reference>
<sequence>MNIQEIKDLMAQFDTSSLREFLFKTNEGELIFSKNEQHLNASISNQEHAVPVPQVQLVPNSTASEASSPASVKDVPVEEQPQAESFVAEGDIVESPLVGVAYLAASPDKPPFVAVGDTVKKGQTLVIIEAMKVMNEVPAPCDGVITEILVSNEDVIEFGQGLVRIK</sequence>
<comment type="function">
    <text evidence="2">This protein is a component of the acetyl coenzyme A carboxylase complex; first, biotin carboxylase catalyzes the carboxylation of the carrier protein and then the transcarboxylase transfers the carboxyl group to form malonyl-CoA.</text>
</comment>
<comment type="pathway">
    <text>Lipid metabolism; fatty acid biosynthesis.</text>
</comment>
<comment type="subunit">
    <text evidence="2">Homodimer.</text>
</comment>
<comment type="mass spectrometry"/>
<proteinExistence type="evidence at protein level"/>
<dbReference type="EMBL" id="CP000003">
    <property type="protein sequence ID" value="AAT87617.1"/>
    <property type="molecule type" value="Genomic_DNA"/>
</dbReference>
<dbReference type="RefSeq" id="WP_011018155.1">
    <property type="nucleotide sequence ID" value="NC_006086.1"/>
</dbReference>
<dbReference type="SMR" id="Q5XAE6"/>
<dbReference type="KEGG" id="spa:M6_Spy1482"/>
<dbReference type="HOGENOM" id="CLU_016733_3_2_9"/>
<dbReference type="UniPathway" id="UPA00094"/>
<dbReference type="Proteomes" id="UP000001167">
    <property type="component" value="Chromosome"/>
</dbReference>
<dbReference type="GO" id="GO:0009317">
    <property type="term" value="C:acetyl-CoA carboxylase complex"/>
    <property type="evidence" value="ECO:0007669"/>
    <property type="project" value="InterPro"/>
</dbReference>
<dbReference type="GO" id="GO:0003989">
    <property type="term" value="F:acetyl-CoA carboxylase activity"/>
    <property type="evidence" value="ECO:0007669"/>
    <property type="project" value="InterPro"/>
</dbReference>
<dbReference type="GO" id="GO:0006633">
    <property type="term" value="P:fatty acid biosynthetic process"/>
    <property type="evidence" value="ECO:0007669"/>
    <property type="project" value="UniProtKB-UniPathway"/>
</dbReference>
<dbReference type="CDD" id="cd06850">
    <property type="entry name" value="biotinyl_domain"/>
    <property type="match status" value="1"/>
</dbReference>
<dbReference type="Gene3D" id="2.40.50.100">
    <property type="match status" value="1"/>
</dbReference>
<dbReference type="InterPro" id="IPR001249">
    <property type="entry name" value="AcCoA_biotinCC"/>
</dbReference>
<dbReference type="InterPro" id="IPR001882">
    <property type="entry name" value="Biotin_BS"/>
</dbReference>
<dbReference type="InterPro" id="IPR050709">
    <property type="entry name" value="Biotin_Carboxyl_Carrier/Decarb"/>
</dbReference>
<dbReference type="InterPro" id="IPR000089">
    <property type="entry name" value="Biotin_lipoyl"/>
</dbReference>
<dbReference type="InterPro" id="IPR011053">
    <property type="entry name" value="Single_hybrid_motif"/>
</dbReference>
<dbReference type="NCBIfam" id="TIGR00531">
    <property type="entry name" value="BCCP"/>
    <property type="match status" value="1"/>
</dbReference>
<dbReference type="PANTHER" id="PTHR45266">
    <property type="entry name" value="OXALOACETATE DECARBOXYLASE ALPHA CHAIN"/>
    <property type="match status" value="1"/>
</dbReference>
<dbReference type="PANTHER" id="PTHR45266:SF3">
    <property type="entry name" value="OXALOACETATE DECARBOXYLASE ALPHA CHAIN"/>
    <property type="match status" value="1"/>
</dbReference>
<dbReference type="Pfam" id="PF00364">
    <property type="entry name" value="Biotin_lipoyl"/>
    <property type="match status" value="1"/>
</dbReference>
<dbReference type="PRINTS" id="PR01071">
    <property type="entry name" value="ACOABIOTINCC"/>
</dbReference>
<dbReference type="SUPFAM" id="SSF51230">
    <property type="entry name" value="Single hybrid motif"/>
    <property type="match status" value="1"/>
</dbReference>
<dbReference type="PROSITE" id="PS00188">
    <property type="entry name" value="BIOTIN"/>
    <property type="match status" value="1"/>
</dbReference>
<dbReference type="PROSITE" id="PS50968">
    <property type="entry name" value="BIOTINYL_LIPOYL"/>
    <property type="match status" value="1"/>
</dbReference>
<keyword id="KW-0092">Biotin</keyword>
<keyword id="KW-0903">Direct protein sequencing</keyword>
<keyword id="KW-0275">Fatty acid biosynthesis</keyword>
<keyword id="KW-0276">Fatty acid metabolism</keyword>
<keyword id="KW-0444">Lipid biosynthesis</keyword>
<keyword id="KW-0443">Lipid metabolism</keyword>
<accession>Q5XAE6</accession>
<accession>P82580</accession>
<organism>
    <name type="scientific">Streptococcus pyogenes serotype M6 (strain ATCC BAA-946 / MGAS10394)</name>
    <dbReference type="NCBI Taxonomy" id="286636"/>
    <lineage>
        <taxon>Bacteria</taxon>
        <taxon>Bacillati</taxon>
        <taxon>Bacillota</taxon>
        <taxon>Bacilli</taxon>
        <taxon>Lactobacillales</taxon>
        <taxon>Streptococcaceae</taxon>
        <taxon>Streptococcus</taxon>
    </lineage>
</organism>
<feature type="chain" id="PRO_0000273576" description="Biotin carboxyl carrier protein of acetyl-CoA carboxylase">
    <location>
        <begin position="1"/>
        <end position="166"/>
    </location>
</feature>
<feature type="domain" description="Biotinyl-binding" evidence="3">
    <location>
        <begin position="90"/>
        <end position="166"/>
    </location>
</feature>
<feature type="region of interest" description="Disordered" evidence="4">
    <location>
        <begin position="61"/>
        <end position="82"/>
    </location>
</feature>
<feature type="compositionally biased region" description="Polar residues" evidence="4">
    <location>
        <begin position="61"/>
        <end position="70"/>
    </location>
</feature>
<feature type="modified residue" description="N6-biotinyllysine" evidence="1 3">
    <location>
        <position position="132"/>
    </location>
</feature>
<gene>
    <name evidence="2" type="primary">accB</name>
    <name type="ordered locus">M6_Spy1482</name>
</gene>
<protein>
    <recommendedName>
        <fullName>Biotin carboxyl carrier protein of acetyl-CoA carboxylase</fullName>
        <shortName>BCCP</shortName>
    </recommendedName>
</protein>